<dbReference type="SMR" id="P84964"/>
<dbReference type="GO" id="GO:0050832">
    <property type="term" value="P:defense response to fungus"/>
    <property type="evidence" value="ECO:0007669"/>
    <property type="project" value="UniProtKB-KW"/>
</dbReference>
<dbReference type="GO" id="GO:0031640">
    <property type="term" value="P:killing of cells of another organism"/>
    <property type="evidence" value="ECO:0007669"/>
    <property type="project" value="UniProtKB-KW"/>
</dbReference>
<dbReference type="Gene3D" id="3.30.30.10">
    <property type="entry name" value="Knottin, scorpion toxin-like"/>
    <property type="match status" value="1"/>
</dbReference>
<dbReference type="InterPro" id="IPR008176">
    <property type="entry name" value="Defensin_plant"/>
</dbReference>
<dbReference type="InterPro" id="IPR003614">
    <property type="entry name" value="Scorpion_toxin-like"/>
</dbReference>
<dbReference type="InterPro" id="IPR036574">
    <property type="entry name" value="Scorpion_toxin-like_sf"/>
</dbReference>
<dbReference type="Pfam" id="PF00304">
    <property type="entry name" value="Gamma-thionin"/>
    <property type="match status" value="1"/>
</dbReference>
<dbReference type="PRINTS" id="PR00288">
    <property type="entry name" value="PUROTHIONIN"/>
</dbReference>
<dbReference type="SMART" id="SM00505">
    <property type="entry name" value="Knot1"/>
    <property type="match status" value="1"/>
</dbReference>
<dbReference type="SUPFAM" id="SSF57095">
    <property type="entry name" value="Scorpion toxin-like"/>
    <property type="match status" value="1"/>
</dbReference>
<dbReference type="PROSITE" id="PS00940">
    <property type="entry name" value="GAMMA_THIONIN"/>
    <property type="match status" value="1"/>
</dbReference>
<protein>
    <recommendedName>
        <fullName>Defensin Tm-AMP-D1.2</fullName>
    </recommendedName>
</protein>
<feature type="chain" id="PRO_0000287888" description="Defensin Tm-AMP-D1.2">
    <location>
        <begin position="1"/>
        <end position="49"/>
    </location>
</feature>
<feature type="disulfide bond" evidence="1">
    <location>
        <begin position="3"/>
        <end position="49"/>
    </location>
</feature>
<feature type="disulfide bond" evidence="1">
    <location>
        <begin position="14"/>
        <end position="34"/>
    </location>
</feature>
<feature type="disulfide bond" evidence="1">
    <location>
        <begin position="20"/>
        <end position="43"/>
    </location>
</feature>
<feature type="disulfide bond" evidence="1">
    <location>
        <begin position="24"/>
        <end position="45"/>
    </location>
</feature>
<sequence length="49" mass="5700">RTCQSQSHKFKGACFSDTNCASVCRTENFPRGQCNQHHVERKCYCERDC</sequence>
<evidence type="ECO:0000250" key="1">
    <source>
        <dbReference type="UniProtKB" id="Q8GTM0"/>
    </source>
</evidence>
<evidence type="ECO:0000269" key="2">
    <source>
    </source>
</evidence>
<evidence type="ECO:0000305" key="3"/>
<keyword id="KW-0929">Antimicrobial</keyword>
<keyword id="KW-0903">Direct protein sequencing</keyword>
<keyword id="KW-1015">Disulfide bond</keyword>
<keyword id="KW-0295">Fungicide</keyword>
<keyword id="KW-0611">Plant defense</keyword>
<reference evidence="3" key="1">
    <citation type="journal article" date="2007" name="Biochimie">
        <title>Seed defensins from T. kiharae and related species: Genome localization of defensin-encoding genes.</title>
        <authorList>
            <person name="Odintsova T.I."/>
            <person name="Egorov T.A."/>
            <person name="Musolyamov A.K."/>
            <person name="Odintsova M.S."/>
            <person name="Pukhalsky V.A."/>
            <person name="Grishin E.V."/>
        </authorList>
    </citation>
    <scope>PROTEIN SEQUENCE</scope>
    <scope>MASS SPECTROMETRY</scope>
    <source>
        <tissue evidence="2">Seed</tissue>
    </source>
</reference>
<proteinExistence type="evidence at protein level"/>
<comment type="function">
    <text evidence="1">Plant defense peptide.</text>
</comment>
<comment type="mass spectrometry" mass="5693.0" method="MALDI" evidence="2"/>
<comment type="similarity">
    <text evidence="3">Belongs to the DEFL family.</text>
</comment>
<accession>P84964</accession>
<name>DEF12_TRIMO</name>
<organism>
    <name type="scientific">Triticum monococcum</name>
    <name type="common">Einkorn wheat</name>
    <name type="synonym">Crithodium monococcum</name>
    <dbReference type="NCBI Taxonomy" id="4568"/>
    <lineage>
        <taxon>Eukaryota</taxon>
        <taxon>Viridiplantae</taxon>
        <taxon>Streptophyta</taxon>
        <taxon>Embryophyta</taxon>
        <taxon>Tracheophyta</taxon>
        <taxon>Spermatophyta</taxon>
        <taxon>Magnoliopsida</taxon>
        <taxon>Liliopsida</taxon>
        <taxon>Poales</taxon>
        <taxon>Poaceae</taxon>
        <taxon>BOP clade</taxon>
        <taxon>Pooideae</taxon>
        <taxon>Triticodae</taxon>
        <taxon>Triticeae</taxon>
        <taxon>Triticinae</taxon>
        <taxon>Triticum</taxon>
    </lineage>
</organism>